<gene>
    <name evidence="1" type="primary">rplF</name>
    <name type="ordered locus">E2348C_3568</name>
</gene>
<feature type="chain" id="PRO_1000166809" description="Large ribosomal subunit protein uL6">
    <location>
        <begin position="1"/>
        <end position="177"/>
    </location>
</feature>
<feature type="modified residue" description="N6-acetyllysine" evidence="1">
    <location>
        <position position="44"/>
    </location>
</feature>
<keyword id="KW-0007">Acetylation</keyword>
<keyword id="KW-1185">Reference proteome</keyword>
<keyword id="KW-0687">Ribonucleoprotein</keyword>
<keyword id="KW-0689">Ribosomal protein</keyword>
<keyword id="KW-0694">RNA-binding</keyword>
<keyword id="KW-0699">rRNA-binding</keyword>
<sequence length="177" mass="18904">MSRVAKAPVVVPAGVDVKINGQVITIKGKNGELTRTLNDAVEVKHADNTLTFGPRDGYADGWAQAGTARALLNSMVIGVTEGFTKKLQLVGVGYRAAVKGNVINLSLGFSHPVDHQLPAGITAECPTQTEIVLKGADKQVIGQVAADLRAYRRPEPYKGKGVRYADEVVRTKEAKKK</sequence>
<evidence type="ECO:0000255" key="1">
    <source>
        <dbReference type="HAMAP-Rule" id="MF_01365"/>
    </source>
</evidence>
<evidence type="ECO:0000305" key="2"/>
<name>RL6_ECO27</name>
<organism>
    <name type="scientific">Escherichia coli O127:H6 (strain E2348/69 / EPEC)</name>
    <dbReference type="NCBI Taxonomy" id="574521"/>
    <lineage>
        <taxon>Bacteria</taxon>
        <taxon>Pseudomonadati</taxon>
        <taxon>Pseudomonadota</taxon>
        <taxon>Gammaproteobacteria</taxon>
        <taxon>Enterobacterales</taxon>
        <taxon>Enterobacteriaceae</taxon>
        <taxon>Escherichia</taxon>
    </lineage>
</organism>
<dbReference type="EMBL" id="FM180568">
    <property type="protein sequence ID" value="CAS11116.1"/>
    <property type="molecule type" value="Genomic_DNA"/>
</dbReference>
<dbReference type="RefSeq" id="WP_000091945.1">
    <property type="nucleotide sequence ID" value="NC_011601.1"/>
</dbReference>
<dbReference type="SMR" id="B7UK29"/>
<dbReference type="GeneID" id="86948169"/>
<dbReference type="KEGG" id="ecg:E2348C_3568"/>
<dbReference type="HOGENOM" id="CLU_065464_1_2_6"/>
<dbReference type="Proteomes" id="UP000008205">
    <property type="component" value="Chromosome"/>
</dbReference>
<dbReference type="GO" id="GO:0022625">
    <property type="term" value="C:cytosolic large ribosomal subunit"/>
    <property type="evidence" value="ECO:0007669"/>
    <property type="project" value="TreeGrafter"/>
</dbReference>
<dbReference type="GO" id="GO:0019843">
    <property type="term" value="F:rRNA binding"/>
    <property type="evidence" value="ECO:0007669"/>
    <property type="project" value="UniProtKB-UniRule"/>
</dbReference>
<dbReference type="GO" id="GO:0003735">
    <property type="term" value="F:structural constituent of ribosome"/>
    <property type="evidence" value="ECO:0007669"/>
    <property type="project" value="InterPro"/>
</dbReference>
<dbReference type="GO" id="GO:0002181">
    <property type="term" value="P:cytoplasmic translation"/>
    <property type="evidence" value="ECO:0007669"/>
    <property type="project" value="TreeGrafter"/>
</dbReference>
<dbReference type="FunFam" id="3.90.930.12:FF:000001">
    <property type="entry name" value="50S ribosomal protein L6"/>
    <property type="match status" value="1"/>
</dbReference>
<dbReference type="FunFam" id="3.90.930.12:FF:000002">
    <property type="entry name" value="50S ribosomal protein L6"/>
    <property type="match status" value="1"/>
</dbReference>
<dbReference type="Gene3D" id="3.90.930.12">
    <property type="entry name" value="Ribosomal protein L6, alpha-beta domain"/>
    <property type="match status" value="2"/>
</dbReference>
<dbReference type="HAMAP" id="MF_01365_B">
    <property type="entry name" value="Ribosomal_uL6_B"/>
    <property type="match status" value="1"/>
</dbReference>
<dbReference type="InterPro" id="IPR000702">
    <property type="entry name" value="Ribosomal_uL6-like"/>
</dbReference>
<dbReference type="InterPro" id="IPR036789">
    <property type="entry name" value="Ribosomal_uL6-like_a/b-dom_sf"/>
</dbReference>
<dbReference type="InterPro" id="IPR020040">
    <property type="entry name" value="Ribosomal_uL6_a/b-dom"/>
</dbReference>
<dbReference type="InterPro" id="IPR019906">
    <property type="entry name" value="Ribosomal_uL6_bac-type"/>
</dbReference>
<dbReference type="InterPro" id="IPR002358">
    <property type="entry name" value="Ribosomal_uL6_CS"/>
</dbReference>
<dbReference type="NCBIfam" id="TIGR03654">
    <property type="entry name" value="L6_bact"/>
    <property type="match status" value="1"/>
</dbReference>
<dbReference type="PANTHER" id="PTHR11655">
    <property type="entry name" value="60S/50S RIBOSOMAL PROTEIN L6/L9"/>
    <property type="match status" value="1"/>
</dbReference>
<dbReference type="PANTHER" id="PTHR11655:SF14">
    <property type="entry name" value="LARGE RIBOSOMAL SUBUNIT PROTEIN UL6M"/>
    <property type="match status" value="1"/>
</dbReference>
<dbReference type="Pfam" id="PF00347">
    <property type="entry name" value="Ribosomal_L6"/>
    <property type="match status" value="2"/>
</dbReference>
<dbReference type="PIRSF" id="PIRSF002162">
    <property type="entry name" value="Ribosomal_L6"/>
    <property type="match status" value="1"/>
</dbReference>
<dbReference type="PRINTS" id="PR00059">
    <property type="entry name" value="RIBOSOMALL6"/>
</dbReference>
<dbReference type="SUPFAM" id="SSF56053">
    <property type="entry name" value="Ribosomal protein L6"/>
    <property type="match status" value="2"/>
</dbReference>
<dbReference type="PROSITE" id="PS00525">
    <property type="entry name" value="RIBOSOMAL_L6_1"/>
    <property type="match status" value="1"/>
</dbReference>
<proteinExistence type="inferred from homology"/>
<comment type="function">
    <text evidence="1">This protein binds to the 23S rRNA, and is important in its secondary structure. It is located near the subunit interface in the base of the L7/L12 stalk, and near the tRNA binding site of the peptidyltransferase center.</text>
</comment>
<comment type="subunit">
    <text evidence="1">Part of the 50S ribosomal subunit.</text>
</comment>
<comment type="similarity">
    <text evidence="1">Belongs to the universal ribosomal protein uL6 family.</text>
</comment>
<reference key="1">
    <citation type="journal article" date="2009" name="J. Bacteriol.">
        <title>Complete genome sequence and comparative genome analysis of enteropathogenic Escherichia coli O127:H6 strain E2348/69.</title>
        <authorList>
            <person name="Iguchi A."/>
            <person name="Thomson N.R."/>
            <person name="Ogura Y."/>
            <person name="Saunders D."/>
            <person name="Ooka T."/>
            <person name="Henderson I.R."/>
            <person name="Harris D."/>
            <person name="Asadulghani M."/>
            <person name="Kurokawa K."/>
            <person name="Dean P."/>
            <person name="Kenny B."/>
            <person name="Quail M.A."/>
            <person name="Thurston S."/>
            <person name="Dougan G."/>
            <person name="Hayashi T."/>
            <person name="Parkhill J."/>
            <person name="Frankel G."/>
        </authorList>
    </citation>
    <scope>NUCLEOTIDE SEQUENCE [LARGE SCALE GENOMIC DNA]</scope>
    <source>
        <strain>E2348/69 / EPEC</strain>
    </source>
</reference>
<protein>
    <recommendedName>
        <fullName evidence="1">Large ribosomal subunit protein uL6</fullName>
    </recommendedName>
    <alternativeName>
        <fullName evidence="2">50S ribosomal protein L6</fullName>
    </alternativeName>
</protein>
<accession>B7UK29</accession>